<proteinExistence type="inferred from homology"/>
<dbReference type="EMBL" id="CP001322">
    <property type="protein sequence ID" value="ACL03605.1"/>
    <property type="molecule type" value="Genomic_DNA"/>
</dbReference>
<dbReference type="RefSeq" id="WP_012611036.1">
    <property type="nucleotide sequence ID" value="NC_011768.1"/>
</dbReference>
<dbReference type="SMR" id="B8FES8"/>
<dbReference type="KEGG" id="dal:Dalk_1908"/>
<dbReference type="eggNOG" id="COG0197">
    <property type="taxonomic scope" value="Bacteria"/>
</dbReference>
<dbReference type="HOGENOM" id="CLU_078858_2_1_7"/>
<dbReference type="Proteomes" id="UP000000739">
    <property type="component" value="Chromosome"/>
</dbReference>
<dbReference type="GO" id="GO:0022625">
    <property type="term" value="C:cytosolic large ribosomal subunit"/>
    <property type="evidence" value="ECO:0007669"/>
    <property type="project" value="TreeGrafter"/>
</dbReference>
<dbReference type="GO" id="GO:0019843">
    <property type="term" value="F:rRNA binding"/>
    <property type="evidence" value="ECO:0007669"/>
    <property type="project" value="UniProtKB-UniRule"/>
</dbReference>
<dbReference type="GO" id="GO:0003735">
    <property type="term" value="F:structural constituent of ribosome"/>
    <property type="evidence" value="ECO:0007669"/>
    <property type="project" value="InterPro"/>
</dbReference>
<dbReference type="GO" id="GO:0000049">
    <property type="term" value="F:tRNA binding"/>
    <property type="evidence" value="ECO:0007669"/>
    <property type="project" value="UniProtKB-KW"/>
</dbReference>
<dbReference type="GO" id="GO:0006412">
    <property type="term" value="P:translation"/>
    <property type="evidence" value="ECO:0007669"/>
    <property type="project" value="UniProtKB-UniRule"/>
</dbReference>
<dbReference type="CDD" id="cd01433">
    <property type="entry name" value="Ribosomal_L16_L10e"/>
    <property type="match status" value="1"/>
</dbReference>
<dbReference type="FunFam" id="3.90.1170.10:FF:000001">
    <property type="entry name" value="50S ribosomal protein L16"/>
    <property type="match status" value="1"/>
</dbReference>
<dbReference type="Gene3D" id="3.90.1170.10">
    <property type="entry name" value="Ribosomal protein L10e/L16"/>
    <property type="match status" value="1"/>
</dbReference>
<dbReference type="HAMAP" id="MF_01342">
    <property type="entry name" value="Ribosomal_uL16"/>
    <property type="match status" value="1"/>
</dbReference>
<dbReference type="InterPro" id="IPR047873">
    <property type="entry name" value="Ribosomal_uL16"/>
</dbReference>
<dbReference type="InterPro" id="IPR000114">
    <property type="entry name" value="Ribosomal_uL16_bact-type"/>
</dbReference>
<dbReference type="InterPro" id="IPR020798">
    <property type="entry name" value="Ribosomal_uL16_CS"/>
</dbReference>
<dbReference type="InterPro" id="IPR016180">
    <property type="entry name" value="Ribosomal_uL16_dom"/>
</dbReference>
<dbReference type="InterPro" id="IPR036920">
    <property type="entry name" value="Ribosomal_uL16_sf"/>
</dbReference>
<dbReference type="NCBIfam" id="TIGR01164">
    <property type="entry name" value="rplP_bact"/>
    <property type="match status" value="1"/>
</dbReference>
<dbReference type="PANTHER" id="PTHR12220">
    <property type="entry name" value="50S/60S RIBOSOMAL PROTEIN L16"/>
    <property type="match status" value="1"/>
</dbReference>
<dbReference type="PANTHER" id="PTHR12220:SF13">
    <property type="entry name" value="LARGE RIBOSOMAL SUBUNIT PROTEIN UL16M"/>
    <property type="match status" value="1"/>
</dbReference>
<dbReference type="Pfam" id="PF00252">
    <property type="entry name" value="Ribosomal_L16"/>
    <property type="match status" value="1"/>
</dbReference>
<dbReference type="PRINTS" id="PR00060">
    <property type="entry name" value="RIBOSOMALL16"/>
</dbReference>
<dbReference type="SUPFAM" id="SSF54686">
    <property type="entry name" value="Ribosomal protein L16p/L10e"/>
    <property type="match status" value="1"/>
</dbReference>
<dbReference type="PROSITE" id="PS00586">
    <property type="entry name" value="RIBOSOMAL_L16_1"/>
    <property type="match status" value="1"/>
</dbReference>
<dbReference type="PROSITE" id="PS00701">
    <property type="entry name" value="RIBOSOMAL_L16_2"/>
    <property type="match status" value="1"/>
</dbReference>
<comment type="function">
    <text evidence="1">Binds 23S rRNA and is also seen to make contacts with the A and possibly P site tRNAs.</text>
</comment>
<comment type="subunit">
    <text evidence="1">Part of the 50S ribosomal subunit.</text>
</comment>
<comment type="similarity">
    <text evidence="1">Belongs to the universal ribosomal protein uL16 family.</text>
</comment>
<evidence type="ECO:0000255" key="1">
    <source>
        <dbReference type="HAMAP-Rule" id="MF_01342"/>
    </source>
</evidence>
<evidence type="ECO:0000305" key="2"/>
<protein>
    <recommendedName>
        <fullName evidence="1">Large ribosomal subunit protein uL16</fullName>
    </recommendedName>
    <alternativeName>
        <fullName evidence="2">50S ribosomal protein L16</fullName>
    </alternativeName>
</protein>
<organism>
    <name type="scientific">Desulfatibacillum aliphaticivorans</name>
    <dbReference type="NCBI Taxonomy" id="218208"/>
    <lineage>
        <taxon>Bacteria</taxon>
        <taxon>Pseudomonadati</taxon>
        <taxon>Thermodesulfobacteriota</taxon>
        <taxon>Desulfobacteria</taxon>
        <taxon>Desulfobacterales</taxon>
        <taxon>Desulfatibacillaceae</taxon>
        <taxon>Desulfatibacillum</taxon>
    </lineage>
</organism>
<reference key="1">
    <citation type="journal article" date="2012" name="Environ. Microbiol.">
        <title>The genome sequence of Desulfatibacillum alkenivorans AK-01: a blueprint for anaerobic alkane oxidation.</title>
        <authorList>
            <person name="Callaghan A.V."/>
            <person name="Morris B.E."/>
            <person name="Pereira I.A."/>
            <person name="McInerney M.J."/>
            <person name="Austin R.N."/>
            <person name="Groves J.T."/>
            <person name="Kukor J.J."/>
            <person name="Suflita J.M."/>
            <person name="Young L.Y."/>
            <person name="Zylstra G.J."/>
            <person name="Wawrik B."/>
        </authorList>
    </citation>
    <scope>NUCLEOTIDE SEQUENCE [LARGE SCALE GENOMIC DNA]</scope>
    <source>
        <strain>AK-01</strain>
    </source>
</reference>
<accession>B8FES8</accession>
<sequence>MLSPKKVKHRKVQKGRMQGVARRGGVLNFGQFGLQALECGFVTNRQIEAARIAMTRHVKRGGKIWIRIFPDKPFTKKPAEVRMGKGKGAPEGWVAVIKPGRILYEMDGVSYELAAEALRLAAHKLPIKTKIVARS</sequence>
<gene>
    <name evidence="1" type="primary">rplP</name>
    <name type="ordered locus">Dalk_1908</name>
</gene>
<feature type="chain" id="PRO_1000142959" description="Large ribosomal subunit protein uL16">
    <location>
        <begin position="1"/>
        <end position="135"/>
    </location>
</feature>
<keyword id="KW-1185">Reference proteome</keyword>
<keyword id="KW-0687">Ribonucleoprotein</keyword>
<keyword id="KW-0689">Ribosomal protein</keyword>
<keyword id="KW-0694">RNA-binding</keyword>
<keyword id="KW-0699">rRNA-binding</keyword>
<keyword id="KW-0820">tRNA-binding</keyword>
<name>RL16_DESAL</name>